<organism>
    <name type="scientific">Psychrobacter sp. (strain PRwf-1)</name>
    <dbReference type="NCBI Taxonomy" id="349106"/>
    <lineage>
        <taxon>Bacteria</taxon>
        <taxon>Pseudomonadati</taxon>
        <taxon>Pseudomonadota</taxon>
        <taxon>Gammaproteobacteria</taxon>
        <taxon>Moraxellales</taxon>
        <taxon>Moraxellaceae</taxon>
        <taxon>Psychrobacter</taxon>
    </lineage>
</organism>
<name>SYL_PSYWF</name>
<feature type="chain" id="PRO_0000334799" description="Leucine--tRNA ligase">
    <location>
        <begin position="1"/>
        <end position="885"/>
    </location>
</feature>
<feature type="short sequence motif" description="'HIGH' region">
    <location>
        <begin position="53"/>
        <end position="63"/>
    </location>
</feature>
<feature type="short sequence motif" description="'KMSKS' region">
    <location>
        <begin position="631"/>
        <end position="635"/>
    </location>
</feature>
<feature type="binding site" evidence="1">
    <location>
        <position position="634"/>
    </location>
    <ligand>
        <name>ATP</name>
        <dbReference type="ChEBI" id="CHEBI:30616"/>
    </ligand>
</feature>
<protein>
    <recommendedName>
        <fullName evidence="1">Leucine--tRNA ligase</fullName>
        <ecNumber evidence="1">6.1.1.4</ecNumber>
    </recommendedName>
    <alternativeName>
        <fullName evidence="1">Leucyl-tRNA synthetase</fullName>
        <shortName evidence="1">LeuRS</shortName>
    </alternativeName>
</protein>
<proteinExistence type="inferred from homology"/>
<comment type="catalytic activity">
    <reaction evidence="1">
        <text>tRNA(Leu) + L-leucine + ATP = L-leucyl-tRNA(Leu) + AMP + diphosphate</text>
        <dbReference type="Rhea" id="RHEA:11688"/>
        <dbReference type="Rhea" id="RHEA-COMP:9613"/>
        <dbReference type="Rhea" id="RHEA-COMP:9622"/>
        <dbReference type="ChEBI" id="CHEBI:30616"/>
        <dbReference type="ChEBI" id="CHEBI:33019"/>
        <dbReference type="ChEBI" id="CHEBI:57427"/>
        <dbReference type="ChEBI" id="CHEBI:78442"/>
        <dbReference type="ChEBI" id="CHEBI:78494"/>
        <dbReference type="ChEBI" id="CHEBI:456215"/>
        <dbReference type="EC" id="6.1.1.4"/>
    </reaction>
</comment>
<comment type="subcellular location">
    <subcellularLocation>
        <location evidence="1">Cytoplasm</location>
    </subcellularLocation>
</comment>
<comment type="similarity">
    <text evidence="1">Belongs to the class-I aminoacyl-tRNA synthetase family.</text>
</comment>
<keyword id="KW-0030">Aminoacyl-tRNA synthetase</keyword>
<keyword id="KW-0067">ATP-binding</keyword>
<keyword id="KW-0963">Cytoplasm</keyword>
<keyword id="KW-0436">Ligase</keyword>
<keyword id="KW-0547">Nucleotide-binding</keyword>
<keyword id="KW-0648">Protein biosynthesis</keyword>
<evidence type="ECO:0000255" key="1">
    <source>
        <dbReference type="HAMAP-Rule" id="MF_00049"/>
    </source>
</evidence>
<reference key="1">
    <citation type="submission" date="2007-05" db="EMBL/GenBank/DDBJ databases">
        <title>Complete sequence of chromosome of Psychrobacter sp. PRwf-1.</title>
        <authorList>
            <consortium name="US DOE Joint Genome Institute"/>
            <person name="Copeland A."/>
            <person name="Lucas S."/>
            <person name="Lapidus A."/>
            <person name="Barry K."/>
            <person name="Detter J.C."/>
            <person name="Glavina del Rio T."/>
            <person name="Hammon N."/>
            <person name="Israni S."/>
            <person name="Dalin E."/>
            <person name="Tice H."/>
            <person name="Pitluck S."/>
            <person name="Chain P."/>
            <person name="Malfatti S."/>
            <person name="Shin M."/>
            <person name="Vergez L."/>
            <person name="Schmutz J."/>
            <person name="Larimer F."/>
            <person name="Land M."/>
            <person name="Hauser L."/>
            <person name="Kyrpides N."/>
            <person name="Kim E."/>
            <person name="Tiedje J."/>
            <person name="Richardson P."/>
        </authorList>
    </citation>
    <scope>NUCLEOTIDE SEQUENCE [LARGE SCALE GENOMIC DNA]</scope>
    <source>
        <strain>PRwf-1</strain>
    </source>
</reference>
<sequence length="885" mass="99051">MSTTAPEQNNPNHYHPQAIEAEQQAKWAADKRFEVSNDISKDANTRYMLSMFPYPSGKLHMGHVRNYTISDVLSRYYRLKGDQVLQPMGWDAFGMPAENAAIANQVAPAKWTFSNIDNMRAQLKTLGLSIDWSREFATCTPEYYRWEQWFFLQLYKKGLVYKKLATVNWDPVDNTVLANEQVVDGKGWRSGAPVEKRDIPMYYFKITDYADELLDDLDKLEGQWPSDVITMQRNWIGRSQGMEVHFPYKNSDDISTLDVFTTRPDTLMGVTYVAVAAEHRLAKLAAEKDPKIAEFCELCKKGSVAEADLAKAEKIGMDTGLTVTHPLTGEEVPVWVANYVLMSYGSGAVMAVPAHDERDFEFANKYNLPIKTVIKTPEDHEGAYTERGTLVNSGEFDGLDFDGSFEAMLAKLEPQKLAARKIQYRLRDWGVSRQRYWGCPIPMINCEYCGNVPVDEADLPIKLPTDVVPDGRGNPLKNIPEFVNTTCPKCGGPAERETDTFDTFMESSWYYARFASPNDDTQMVEKAAADKWLPVDQYVGGVEHAVMHLLYARFYHKLMRDEGLVSGDEPFKNLLTQGMVLAGTLYRDNPEGGKTYYFADDVEISYDDRGQPTQAILKADGQPVTIGKIEKMSKSKNNGVDPQTTIDQYGADTVRLYTLFAAPADQTLEWSDDSLKGPYNFLKKVWRETQSHLEATQELGLQVANLPAASSIDASQLDSLAKGLRRKTHEVITKIDNDLGERLSLNTPVSSLMELANEIGTFISKNQQINEHTLAVQHEALVTLLTLLSVYAPHIGEHLLEKLGVDTTRLRYPEADSAALVQDTITMVVQVNGKVRGKMEVAPGTDAESLKAQAKAIESVAKYLTGDIKKEIVVPNKLVNIVVAG</sequence>
<gene>
    <name evidence="1" type="primary">leuS</name>
    <name type="ordered locus">PsycPRwf_1830</name>
</gene>
<accession>A5WGH9</accession>
<dbReference type="EC" id="6.1.1.4" evidence="1"/>
<dbReference type="EMBL" id="CP000713">
    <property type="protein sequence ID" value="ABQ94770.1"/>
    <property type="molecule type" value="Genomic_DNA"/>
</dbReference>
<dbReference type="SMR" id="A5WGH9"/>
<dbReference type="STRING" id="349106.PsycPRwf_1830"/>
<dbReference type="KEGG" id="prw:PsycPRwf_1830"/>
<dbReference type="eggNOG" id="COG0495">
    <property type="taxonomic scope" value="Bacteria"/>
</dbReference>
<dbReference type="HOGENOM" id="CLU_004427_0_0_6"/>
<dbReference type="GO" id="GO:0005829">
    <property type="term" value="C:cytosol"/>
    <property type="evidence" value="ECO:0007669"/>
    <property type="project" value="TreeGrafter"/>
</dbReference>
<dbReference type="GO" id="GO:0002161">
    <property type="term" value="F:aminoacyl-tRNA deacylase activity"/>
    <property type="evidence" value="ECO:0007669"/>
    <property type="project" value="InterPro"/>
</dbReference>
<dbReference type="GO" id="GO:0005524">
    <property type="term" value="F:ATP binding"/>
    <property type="evidence" value="ECO:0007669"/>
    <property type="project" value="UniProtKB-UniRule"/>
</dbReference>
<dbReference type="GO" id="GO:0004823">
    <property type="term" value="F:leucine-tRNA ligase activity"/>
    <property type="evidence" value="ECO:0007669"/>
    <property type="project" value="UniProtKB-UniRule"/>
</dbReference>
<dbReference type="GO" id="GO:0006429">
    <property type="term" value="P:leucyl-tRNA aminoacylation"/>
    <property type="evidence" value="ECO:0007669"/>
    <property type="project" value="UniProtKB-UniRule"/>
</dbReference>
<dbReference type="CDD" id="cd00812">
    <property type="entry name" value="LeuRS_core"/>
    <property type="match status" value="1"/>
</dbReference>
<dbReference type="FunFam" id="1.10.730.10:FF:000002">
    <property type="entry name" value="Leucine--tRNA ligase"/>
    <property type="match status" value="1"/>
</dbReference>
<dbReference type="FunFam" id="3.40.50.620:FF:000003">
    <property type="entry name" value="Leucine--tRNA ligase"/>
    <property type="match status" value="1"/>
</dbReference>
<dbReference type="FunFam" id="3.40.50.620:FF:000124">
    <property type="entry name" value="Leucine--tRNA ligase"/>
    <property type="match status" value="1"/>
</dbReference>
<dbReference type="FunFam" id="3.90.740.10:FF:000012">
    <property type="entry name" value="Leucine--tRNA ligase"/>
    <property type="match status" value="1"/>
</dbReference>
<dbReference type="Gene3D" id="2.20.28.290">
    <property type="match status" value="1"/>
</dbReference>
<dbReference type="Gene3D" id="3.10.20.590">
    <property type="match status" value="1"/>
</dbReference>
<dbReference type="Gene3D" id="3.40.50.620">
    <property type="entry name" value="HUPs"/>
    <property type="match status" value="2"/>
</dbReference>
<dbReference type="Gene3D" id="1.10.730.10">
    <property type="entry name" value="Isoleucyl-tRNA Synthetase, Domain 1"/>
    <property type="match status" value="1"/>
</dbReference>
<dbReference type="Gene3D" id="3.90.740.10">
    <property type="entry name" value="Valyl/Leucyl/Isoleucyl-tRNA synthetase, editing domain"/>
    <property type="match status" value="1"/>
</dbReference>
<dbReference type="HAMAP" id="MF_00049_B">
    <property type="entry name" value="Leu_tRNA_synth_B"/>
    <property type="match status" value="1"/>
</dbReference>
<dbReference type="InterPro" id="IPR001412">
    <property type="entry name" value="aa-tRNA-synth_I_CS"/>
</dbReference>
<dbReference type="InterPro" id="IPR002300">
    <property type="entry name" value="aa-tRNA-synth_Ia"/>
</dbReference>
<dbReference type="InterPro" id="IPR002302">
    <property type="entry name" value="Leu-tRNA-ligase"/>
</dbReference>
<dbReference type="InterPro" id="IPR025709">
    <property type="entry name" value="Leu_tRNA-synth_edit"/>
</dbReference>
<dbReference type="InterPro" id="IPR013155">
    <property type="entry name" value="M/V/L/I-tRNA-synth_anticd-bd"/>
</dbReference>
<dbReference type="InterPro" id="IPR014729">
    <property type="entry name" value="Rossmann-like_a/b/a_fold"/>
</dbReference>
<dbReference type="InterPro" id="IPR009080">
    <property type="entry name" value="tRNAsynth_Ia_anticodon-bd"/>
</dbReference>
<dbReference type="InterPro" id="IPR009008">
    <property type="entry name" value="Val/Leu/Ile-tRNA-synth_edit"/>
</dbReference>
<dbReference type="NCBIfam" id="TIGR00396">
    <property type="entry name" value="leuS_bact"/>
    <property type="match status" value="1"/>
</dbReference>
<dbReference type="PANTHER" id="PTHR43740:SF2">
    <property type="entry name" value="LEUCINE--TRNA LIGASE, MITOCHONDRIAL"/>
    <property type="match status" value="1"/>
</dbReference>
<dbReference type="PANTHER" id="PTHR43740">
    <property type="entry name" value="LEUCYL-TRNA SYNTHETASE"/>
    <property type="match status" value="1"/>
</dbReference>
<dbReference type="Pfam" id="PF08264">
    <property type="entry name" value="Anticodon_1"/>
    <property type="match status" value="1"/>
</dbReference>
<dbReference type="Pfam" id="PF00133">
    <property type="entry name" value="tRNA-synt_1"/>
    <property type="match status" value="3"/>
</dbReference>
<dbReference type="Pfam" id="PF13603">
    <property type="entry name" value="tRNA-synt_1_2"/>
    <property type="match status" value="1"/>
</dbReference>
<dbReference type="PRINTS" id="PR00985">
    <property type="entry name" value="TRNASYNTHLEU"/>
</dbReference>
<dbReference type="SUPFAM" id="SSF47323">
    <property type="entry name" value="Anticodon-binding domain of a subclass of class I aminoacyl-tRNA synthetases"/>
    <property type="match status" value="1"/>
</dbReference>
<dbReference type="SUPFAM" id="SSF52374">
    <property type="entry name" value="Nucleotidylyl transferase"/>
    <property type="match status" value="1"/>
</dbReference>
<dbReference type="SUPFAM" id="SSF50677">
    <property type="entry name" value="ValRS/IleRS/LeuRS editing domain"/>
    <property type="match status" value="1"/>
</dbReference>
<dbReference type="PROSITE" id="PS00178">
    <property type="entry name" value="AA_TRNA_LIGASE_I"/>
    <property type="match status" value="1"/>
</dbReference>